<gene>
    <name type="primary">trm-1</name>
    <name type="synonym">trm1</name>
    <name type="ORF">ZC376.5</name>
</gene>
<sequence>MTENVNSSGDSAIKSEDKEEVTVIQEGQAKVGFHGPVFYNPVQEFNRDLTVTVLRQFSADHQKWAEEQKQLKTEEEPPKKKNKLAINEDGKIRILDALSASGLRALRFSKEVPNVGFIMANDFSDNAVASIQENVKLNGVEDIVEAHFGDAVMTMMEHRGIDKRFHAVDLDPYGTASTFLDSAVQCVADRGILMVTCTDMAVLCGNTPEACYNKYDAVTTRMKCCHEVGLRILLRAIDSAANRYTRYIEPLVSISVDFYVRVFVRVHTGAFQAKQSGTKVGTVLVCSGCHSMEPLVLLKRGEGNQQSKYSIPTVRHSISGPGNRCIHCLLPLHQIGPIYLAPIHSKPFVTSLLERLKSTPEAERLGTHGRLQGVLTMVNEELDDVLYYEHNQMANVVKVSVPKSQSVRSAILNAGFKVSGSHCNPRAIKTNAPMHLLWDIYRQVAKDTSVDREKRLAKESAGYHILGQPITNTVNFTLHPGAIEQAKKENLVRFQCNKGKNWGPRQKAKGSVNSTKAGFQLTEHKE</sequence>
<evidence type="ECO:0000250" key="1">
    <source>
        <dbReference type="UniProtKB" id="O67010"/>
    </source>
</evidence>
<evidence type="ECO:0000255" key="2">
    <source>
        <dbReference type="PROSITE-ProRule" id="PRU00958"/>
    </source>
</evidence>
<evidence type="ECO:0000256" key="3">
    <source>
        <dbReference type="SAM" id="MobiDB-lite"/>
    </source>
</evidence>
<evidence type="ECO:0000269" key="4">
    <source>
    </source>
</evidence>
<evidence type="ECO:0000305" key="5">
    <source>
    </source>
</evidence>
<organism>
    <name type="scientific">Caenorhabditis elegans</name>
    <dbReference type="NCBI Taxonomy" id="6239"/>
    <lineage>
        <taxon>Eukaryota</taxon>
        <taxon>Metazoa</taxon>
        <taxon>Ecdysozoa</taxon>
        <taxon>Nematoda</taxon>
        <taxon>Chromadorea</taxon>
        <taxon>Rhabditida</taxon>
        <taxon>Rhabditina</taxon>
        <taxon>Rhabditomorpha</taxon>
        <taxon>Rhabditoidea</taxon>
        <taxon>Rhabditidae</taxon>
        <taxon>Peloderinae</taxon>
        <taxon>Caenorhabditis</taxon>
    </lineage>
</organism>
<feature type="chain" id="PRO_0000147673" description="tRNA (guanine(26)-N(2))-dimethyltransferase">
    <location>
        <begin position="1"/>
        <end position="526"/>
    </location>
</feature>
<feature type="domain" description="Trm1 methyltransferase" evidence="2">
    <location>
        <begin position="22"/>
        <end position="441"/>
    </location>
</feature>
<feature type="region of interest" description="Disordered" evidence="3">
    <location>
        <begin position="1"/>
        <end position="20"/>
    </location>
</feature>
<feature type="region of interest" description="Disordered" evidence="3">
    <location>
        <begin position="498"/>
        <end position="526"/>
    </location>
</feature>
<feature type="compositionally biased region" description="Polar residues" evidence="3">
    <location>
        <begin position="1"/>
        <end position="10"/>
    </location>
</feature>
<feature type="binding site" evidence="1">
    <location>
        <position position="47"/>
    </location>
    <ligand>
        <name>S-adenosyl-L-methionine</name>
        <dbReference type="ChEBI" id="CHEBI:59789"/>
    </ligand>
</feature>
<feature type="binding site" evidence="1">
    <location>
        <position position="104"/>
    </location>
    <ligand>
        <name>S-adenosyl-L-methionine</name>
        <dbReference type="ChEBI" id="CHEBI:59789"/>
    </ligand>
</feature>
<feature type="binding site" evidence="1">
    <location>
        <position position="122"/>
    </location>
    <ligand>
        <name>S-adenosyl-L-methionine</name>
        <dbReference type="ChEBI" id="CHEBI:59789"/>
    </ligand>
</feature>
<feature type="binding site" evidence="1">
    <location>
        <position position="286"/>
    </location>
    <ligand>
        <name>Zn(2+)</name>
        <dbReference type="ChEBI" id="CHEBI:29105"/>
    </ligand>
</feature>
<feature type="binding site" evidence="1">
    <location>
        <position position="289"/>
    </location>
    <ligand>
        <name>Zn(2+)</name>
        <dbReference type="ChEBI" id="CHEBI:29105"/>
    </ligand>
</feature>
<feature type="binding site" evidence="1">
    <location>
        <position position="325"/>
    </location>
    <ligand>
        <name>Zn(2+)</name>
        <dbReference type="ChEBI" id="CHEBI:29105"/>
    </ligand>
</feature>
<feature type="binding site" evidence="1">
    <location>
        <position position="328"/>
    </location>
    <ligand>
        <name>Zn(2+)</name>
        <dbReference type="ChEBI" id="CHEBI:29105"/>
    </ligand>
</feature>
<feature type="mutagenesis site" description="Loss of activity." evidence="4">
    <original>R</original>
    <variation>G</variation>
    <location>
        <position position="246"/>
    </location>
</feature>
<proteinExistence type="evidence at protein level"/>
<reference key="1">
    <citation type="journal article" date="1999" name="Gene">
        <title>Caenorhabditis elegans ZC376.5 encodes a tRNA (m2/2G(26))dimethyltransferance in which (246)arginine is important for the enzyme activity.</title>
        <authorList>
            <person name="Liu J.M."/>
            <person name="Zhou G.Q."/>
            <person name="Straby K.B."/>
        </authorList>
    </citation>
    <scope>NUCLEOTIDE SEQUENCE [MRNA]</scope>
    <scope>FUNCTION</scope>
    <scope>CATALYTIC ACTIVITY</scope>
    <scope>MUTAGENESIS OF ARG-246</scope>
    <source>
        <strain>Bristol N2</strain>
    </source>
</reference>
<reference key="2">
    <citation type="journal article" date="1998" name="Science">
        <title>Genome sequence of the nematode C. elegans: a platform for investigating biology.</title>
        <authorList>
            <consortium name="The C. elegans sequencing consortium"/>
        </authorList>
    </citation>
    <scope>NUCLEOTIDE SEQUENCE [LARGE SCALE GENOMIC DNA]</scope>
    <source>
        <strain>Bristol N2</strain>
    </source>
</reference>
<accession>Q23270</accession>
<comment type="function">
    <text evidence="4">Dimethylates a single guanine residue at position 26 of most tRNAs using S-adenosyl-L-methionine as donor of the methyl groups.</text>
</comment>
<comment type="catalytic activity">
    <reaction evidence="2 5">
        <text>guanosine(26) in tRNA + 2 S-adenosyl-L-methionine = N(2)-dimethylguanosine(26) in tRNA + 2 S-adenosyl-L-homocysteine + 2 H(+)</text>
        <dbReference type="Rhea" id="RHEA:43140"/>
        <dbReference type="Rhea" id="RHEA-COMP:10359"/>
        <dbReference type="Rhea" id="RHEA-COMP:10360"/>
        <dbReference type="ChEBI" id="CHEBI:15378"/>
        <dbReference type="ChEBI" id="CHEBI:57856"/>
        <dbReference type="ChEBI" id="CHEBI:59789"/>
        <dbReference type="ChEBI" id="CHEBI:74269"/>
        <dbReference type="ChEBI" id="CHEBI:74513"/>
        <dbReference type="EC" id="2.1.1.216"/>
    </reaction>
</comment>
<comment type="similarity">
    <text evidence="2">Belongs to the class I-like SAM-binding methyltransferase superfamily. Trm1 family.</text>
</comment>
<name>TRM1_CAEEL</name>
<dbReference type="EC" id="2.1.1.216" evidence="5"/>
<dbReference type="EMBL" id="AF059608">
    <property type="protein sequence ID" value="AAD13737.1"/>
    <property type="molecule type" value="mRNA"/>
</dbReference>
<dbReference type="EMBL" id="Z77136">
    <property type="protein sequence ID" value="CAB00881.1"/>
    <property type="molecule type" value="Genomic_DNA"/>
</dbReference>
<dbReference type="PIR" id="T43053">
    <property type="entry name" value="T43053"/>
</dbReference>
<dbReference type="RefSeq" id="NP_001379156.1">
    <property type="nucleotide sequence ID" value="NM_001392650.1"/>
</dbReference>
<dbReference type="RefSeq" id="NP_506513.1">
    <property type="nucleotide sequence ID" value="NM_074112.5"/>
</dbReference>
<dbReference type="SMR" id="Q23270"/>
<dbReference type="BioGRID" id="44926">
    <property type="interactions" value="5"/>
</dbReference>
<dbReference type="FunCoup" id="Q23270">
    <property type="interactions" value="3183"/>
</dbReference>
<dbReference type="STRING" id="6239.ZC376.5.1"/>
<dbReference type="PaxDb" id="6239-ZC376.5.1"/>
<dbReference type="PeptideAtlas" id="Q23270"/>
<dbReference type="EnsemblMetazoa" id="ZC376.5.1">
    <property type="protein sequence ID" value="ZC376.5.1"/>
    <property type="gene ID" value="WBGene00006613"/>
</dbReference>
<dbReference type="EnsemblMetazoa" id="ZC376.5.2">
    <property type="protein sequence ID" value="ZC376.5.2"/>
    <property type="gene ID" value="WBGene00006613"/>
</dbReference>
<dbReference type="GeneID" id="179920"/>
<dbReference type="UCSC" id="ZC376.5">
    <property type="organism name" value="c. elegans"/>
</dbReference>
<dbReference type="AGR" id="WB:WBGene00006613"/>
<dbReference type="WormBase" id="ZC376.5">
    <property type="protein sequence ID" value="CE15201"/>
    <property type="gene ID" value="WBGene00006613"/>
    <property type="gene designation" value="trm-1"/>
</dbReference>
<dbReference type="eggNOG" id="KOG1253">
    <property type="taxonomic scope" value="Eukaryota"/>
</dbReference>
<dbReference type="GeneTree" id="ENSGT00530000063646"/>
<dbReference type="HOGENOM" id="CLU_010862_4_1_1"/>
<dbReference type="InParanoid" id="Q23270"/>
<dbReference type="OMA" id="MKCCHEM"/>
<dbReference type="OrthoDB" id="6349953at2759"/>
<dbReference type="PhylomeDB" id="Q23270"/>
<dbReference type="BRENDA" id="2.1.1.216">
    <property type="organism ID" value="1045"/>
</dbReference>
<dbReference type="PRO" id="PR:Q23270"/>
<dbReference type="Proteomes" id="UP000001940">
    <property type="component" value="Chromosome V"/>
</dbReference>
<dbReference type="Bgee" id="WBGene00006613">
    <property type="expression patterns" value="Expressed in germ line (C elegans) and 4 other cell types or tissues"/>
</dbReference>
<dbReference type="GO" id="GO:0005634">
    <property type="term" value="C:nucleus"/>
    <property type="evidence" value="ECO:0000318"/>
    <property type="project" value="GO_Central"/>
</dbReference>
<dbReference type="GO" id="GO:0160104">
    <property type="term" value="F:tRNA (guanine(26)-N2)-dimethyltransferase activity"/>
    <property type="evidence" value="ECO:0007669"/>
    <property type="project" value="UniProtKB-EC"/>
</dbReference>
<dbReference type="GO" id="GO:0000049">
    <property type="term" value="F:tRNA binding"/>
    <property type="evidence" value="ECO:0007669"/>
    <property type="project" value="UniProtKB-KW"/>
</dbReference>
<dbReference type="GO" id="GO:0002940">
    <property type="term" value="P:tRNA N2-guanine methylation"/>
    <property type="evidence" value="ECO:0000318"/>
    <property type="project" value="GO_Central"/>
</dbReference>
<dbReference type="FunFam" id="3.30.56.70:FF:000001">
    <property type="entry name" value="tRNA (guanine(26)-N(2))-dimethyltransferase"/>
    <property type="match status" value="1"/>
</dbReference>
<dbReference type="FunFam" id="3.40.50.150:FF:000264">
    <property type="entry name" value="tRNA (guanine(26)-N(2))-dimethyltransferase"/>
    <property type="match status" value="1"/>
</dbReference>
<dbReference type="Gene3D" id="3.30.56.70">
    <property type="entry name" value="N2,N2-dimethylguanosine tRNA methyltransferase, C-terminal domain"/>
    <property type="match status" value="1"/>
</dbReference>
<dbReference type="Gene3D" id="3.40.50.150">
    <property type="entry name" value="Vaccinia Virus protein VP39"/>
    <property type="match status" value="1"/>
</dbReference>
<dbReference type="InterPro" id="IPR029063">
    <property type="entry name" value="SAM-dependent_MTases_sf"/>
</dbReference>
<dbReference type="InterPro" id="IPR002905">
    <property type="entry name" value="Trm1"/>
</dbReference>
<dbReference type="InterPro" id="IPR042296">
    <property type="entry name" value="tRNA_met_Trm1_C"/>
</dbReference>
<dbReference type="NCBIfam" id="TIGR00308">
    <property type="entry name" value="TRM1"/>
    <property type="match status" value="1"/>
</dbReference>
<dbReference type="PANTHER" id="PTHR10631">
    <property type="entry name" value="N 2 ,N 2 -DIMETHYLGUANOSINE TRNA METHYLTRANSFERASE"/>
    <property type="match status" value="1"/>
</dbReference>
<dbReference type="PANTHER" id="PTHR10631:SF3">
    <property type="entry name" value="TRNA (GUANINE(26)-N(2))-DIMETHYLTRANSFERASE"/>
    <property type="match status" value="1"/>
</dbReference>
<dbReference type="Pfam" id="PF02005">
    <property type="entry name" value="TRM"/>
    <property type="match status" value="1"/>
</dbReference>
<dbReference type="SUPFAM" id="SSF53335">
    <property type="entry name" value="S-adenosyl-L-methionine-dependent methyltransferases"/>
    <property type="match status" value="1"/>
</dbReference>
<dbReference type="PROSITE" id="PS51626">
    <property type="entry name" value="SAM_MT_TRM1"/>
    <property type="match status" value="1"/>
</dbReference>
<keyword id="KW-0479">Metal-binding</keyword>
<keyword id="KW-0489">Methyltransferase</keyword>
<keyword id="KW-1185">Reference proteome</keyword>
<keyword id="KW-0694">RNA-binding</keyword>
<keyword id="KW-0949">S-adenosyl-L-methionine</keyword>
<keyword id="KW-0808">Transferase</keyword>
<keyword id="KW-0819">tRNA processing</keyword>
<keyword id="KW-0820">tRNA-binding</keyword>
<keyword id="KW-0862">Zinc</keyword>
<protein>
    <recommendedName>
        <fullName>tRNA (guanine(26)-N(2))-dimethyltransferase</fullName>
        <ecNumber evidence="5">2.1.1.216</ecNumber>
    </recommendedName>
    <alternativeName>
        <fullName>tRNA 2,2-dimethylguanosine-26 methyltransferase</fullName>
    </alternativeName>
    <alternativeName>
        <fullName>tRNA(guanine-26,N(2)-N(2)) methyltransferase</fullName>
    </alternativeName>
    <alternativeName>
        <fullName>tRNA(m(2,2)G26)dimethyltransferase</fullName>
    </alternativeName>
</protein>